<protein>
    <recommendedName>
        <fullName>Cell surface glycoprotein</fullName>
    </recommendedName>
    <alternativeName>
        <fullName>S-layer glycoprotein</fullName>
    </alternativeName>
</protein>
<reference key="1">
    <citation type="journal article" date="1987" name="J. Biol. Chem.">
        <title>The primary structure of a procaryotic glycoprotein. Cloning and sequencing of the cell surface glycoprotein gene of halobacteria.</title>
        <authorList>
            <person name="Lechner J."/>
            <person name="Sumper M."/>
        </authorList>
    </citation>
    <scope>NUCLEOTIDE SEQUENCE [GENOMIC DNA]</scope>
    <scope>PROTEIN SEQUENCE OF 35-55; 509-519; 626-645 AND 787-796</scope>
    <scope>LACK OF GLYCOSYLATION AT ASN-51</scope>
    <scope>GLYCOSYLATION AT ASN-36; ASN-513 AND ASN-643</scope>
    <source>
        <strain>R1M1</strain>
    </source>
</reference>
<reference key="2">
    <citation type="journal article" date="2008" name="Genomics">
        <title>Evolution in the laboratory: the genome of Halobacterium salinarum strain R1 compared to that of strain NRC-1.</title>
        <authorList>
            <person name="Pfeiffer F."/>
            <person name="Schuster S.C."/>
            <person name="Broicher A."/>
            <person name="Falb M."/>
            <person name="Palm P."/>
            <person name="Rodewald K."/>
            <person name="Ruepp A."/>
            <person name="Soppa J."/>
            <person name="Tittor J."/>
            <person name="Oesterhelt D."/>
        </authorList>
    </citation>
    <scope>NUCLEOTIDE SEQUENCE [LARGE SCALE GENOMIC DNA]</scope>
    <source>
        <strain>ATCC 29341 / DSM 671 / R1</strain>
    </source>
</reference>
<reference key="3">
    <citation type="journal article" date="1976" name="J. Biol. Chem.">
        <title>Purification and characterization of a prokaryotic glycoprotein from the cell envelope of Halobacterium salinarium.</title>
        <authorList>
            <person name="Mescher M.F."/>
            <person name="Strominger J.L."/>
        </authorList>
    </citation>
    <scope>IDENTIFICATION</scope>
</reference>
<reference key="4">
    <citation type="journal article" date="1999" name="J. Biol. Chem.">
        <title>Evidence for covalent attachment of diphytanylglyceryl phosphate to the cell-surface glycoprotein of Halobacterium halobium.</title>
        <authorList>
            <person name="Kikuchi A."/>
            <person name="Sagami H."/>
            <person name="Ogura K."/>
        </authorList>
    </citation>
    <scope>PROTEIN SEQUENCE OF 770-778</scope>
    <scope>LIPIDATION</scope>
    <source>
        <strain>R1M1</strain>
    </source>
</reference>
<comment type="function">
    <text evidence="1">S-layer protein. The S-layer is a paracrystalline mono-layered assembly of proteins which coat the surface of the cell.</text>
</comment>
<comment type="subcellular location">
    <subcellularLocation>
        <location evidence="1">Secreted</location>
        <location evidence="1">Cell wall</location>
        <location evidence="1">S-layer</location>
    </subcellularLocation>
    <subcellularLocation>
        <location evidence="1">Cell membrane</location>
    </subcellularLocation>
</comment>
<comment type="PTM">
    <text evidence="5">N-linked glycan at Asn-36 consists of a glycosaminoglycan chain, constructed by a repeating sulfated pentasaccharide block composed of GlcNAc, GalNAc, Gal, GalA, 3-O-methyl-GalA, and sulfate in the molar ratio of 1:1:1:1:1:2; the other N-linked glycans contain Glc, GlcA and IdoA.</text>
</comment>
<comment type="PTM">
    <text evidence="5">O-linked glycans consist of Glc-Gal disaccharides.</text>
</comment>
<comment type="PTM">
    <text evidence="4">The C-terminus (residues 770-778) is lipidated with diphytanylglyceryl phosphate.</text>
</comment>
<comment type="PTM">
    <text evidence="1">Cleaved by the archaeosortase ArtA at the C-terminus, with removal of a short hydrophobic segment.</text>
</comment>
<comment type="similarity">
    <text evidence="6">Belongs to the halobacterial S-layer protein family.</text>
</comment>
<accession>B0R8E4</accession>
<accession>P08198</accession>
<accession>Q9HM69</accession>
<gene>
    <name type="primary">csg</name>
    <name type="ordered locus">OE_4759F</name>
</gene>
<dbReference type="EMBL" id="J02767">
    <property type="protein sequence ID" value="AAA72185.1"/>
    <property type="molecule type" value="Genomic_DNA"/>
</dbReference>
<dbReference type="EMBL" id="AM774415">
    <property type="protein sequence ID" value="CAP15013.1"/>
    <property type="molecule type" value="Genomic_DNA"/>
</dbReference>
<dbReference type="RefSeq" id="WP_012289536.1">
    <property type="nucleotide sequence ID" value="NC_010364.1"/>
</dbReference>
<dbReference type="SMR" id="B0R8E4"/>
<dbReference type="GlyCosmos" id="B0R8E4">
    <property type="glycosylation" value="27 sites, No reported glycans"/>
</dbReference>
<dbReference type="iPTMnet" id="B0R8E4"/>
<dbReference type="EnsemblBacteria" id="CAP15013">
    <property type="protein sequence ID" value="CAP15013"/>
    <property type="gene ID" value="OE_4759F"/>
</dbReference>
<dbReference type="GeneID" id="68695155"/>
<dbReference type="KEGG" id="hsl:OE_4759F"/>
<dbReference type="HOGENOM" id="CLU_015552_0_0_2"/>
<dbReference type="Proteomes" id="UP000001321">
    <property type="component" value="Chromosome"/>
</dbReference>
<dbReference type="GO" id="GO:0005576">
    <property type="term" value="C:extracellular region"/>
    <property type="evidence" value="ECO:0007669"/>
    <property type="project" value="UniProtKB-KW"/>
</dbReference>
<dbReference type="GO" id="GO:0005886">
    <property type="term" value="C:plasma membrane"/>
    <property type="evidence" value="ECO:0007669"/>
    <property type="project" value="UniProtKB-SubCell"/>
</dbReference>
<dbReference type="GO" id="GO:0030115">
    <property type="term" value="C:S-layer"/>
    <property type="evidence" value="ECO:0007669"/>
    <property type="project" value="UniProtKB-SubCell"/>
</dbReference>
<dbReference type="GO" id="GO:0071555">
    <property type="term" value="P:cell wall organization"/>
    <property type="evidence" value="ECO:0007669"/>
    <property type="project" value="UniProtKB-KW"/>
</dbReference>
<dbReference type="InterPro" id="IPR026458">
    <property type="entry name" value="Csg_halobact"/>
</dbReference>
<dbReference type="InterPro" id="IPR026371">
    <property type="entry name" value="PGF_CTERM"/>
</dbReference>
<dbReference type="InterPro" id="IPR026452">
    <property type="entry name" value="Surf_glycop_sig_pep"/>
</dbReference>
<dbReference type="NCBIfam" id="TIGR04207">
    <property type="entry name" value="halo_sig_pep"/>
    <property type="match status" value="1"/>
</dbReference>
<dbReference type="NCBIfam" id="TIGR04216">
    <property type="entry name" value="halo_surf_glyco"/>
    <property type="match status" value="1"/>
</dbReference>
<dbReference type="NCBIfam" id="TIGR04126">
    <property type="entry name" value="PGF_CTERM"/>
    <property type="match status" value="1"/>
</dbReference>
<dbReference type="Pfam" id="PF18204">
    <property type="entry name" value="PGF-CTERM"/>
    <property type="match status" value="1"/>
</dbReference>
<feature type="signal peptide" evidence="5">
    <location>
        <begin position="1"/>
        <end position="34"/>
    </location>
</feature>
<feature type="chain" id="PRO_0000428763" description="Cell surface glycoprotein">
    <location>
        <begin position="35"/>
        <end status="unknown"/>
    </location>
</feature>
<feature type="propeptide" id="PRO_0000444305" description="Removed by archaeosortase" evidence="1">
    <location>
        <begin status="unknown"/>
        <end position="852"/>
    </location>
</feature>
<feature type="transmembrane region" description="Helical" evidence="2">
    <location>
        <begin position="829"/>
        <end position="849"/>
    </location>
</feature>
<feature type="region of interest" description="Disordered" evidence="3">
    <location>
        <begin position="84"/>
        <end position="131"/>
    </location>
</feature>
<feature type="region of interest" description="Disordered" evidence="3">
    <location>
        <begin position="772"/>
        <end position="828"/>
    </location>
</feature>
<feature type="short sequence motif" description="PGF sorting signal" evidence="1">
    <location>
        <begin position="830"/>
        <end position="832"/>
    </location>
</feature>
<feature type="compositionally biased region" description="Polar residues" evidence="3">
    <location>
        <begin position="115"/>
        <end position="126"/>
    </location>
</feature>
<feature type="compositionally biased region" description="Low complexity" evidence="3">
    <location>
        <begin position="785"/>
        <end position="823"/>
    </location>
</feature>
<feature type="site" description="Not glycosylated" evidence="5">
    <location>
        <position position="51"/>
    </location>
</feature>
<feature type="glycosylation site" description="N-linked (GalNAc...) (glycosaminoglycan) asparagine" evidence="5">
    <location>
        <position position="36"/>
    </location>
</feature>
<feature type="glycosylation site" description="N-linked (Glc...) asparagine" evidence="6">
    <location>
        <position position="339"/>
    </location>
</feature>
<feature type="glycosylation site" description="N-linked (Glc...) asparagine" evidence="6">
    <location>
        <position position="398"/>
    </location>
</feature>
<feature type="glycosylation site" description="N-linked (Glc...) asparagine" evidence="6">
    <location>
        <position position="438"/>
    </location>
</feature>
<feature type="glycosylation site" description="N-linked (Glc...) asparagine" evidence="5">
    <location>
        <position position="513"/>
    </location>
</feature>
<feature type="glycosylation site" description="N-linked (Glc...) asparagine" evidence="5">
    <location>
        <position position="643"/>
    </location>
</feature>
<feature type="glycosylation site" description="N-linked (Glc...) asparagine" evidence="6">
    <location>
        <position position="727"/>
    </location>
</feature>
<feature type="glycosylation site" description="N-linked (Glc...) asparagine" evidence="6">
    <location>
        <position position="751"/>
    </location>
</feature>
<feature type="glycosylation site" description="N-linked (Glc...) asparagine" evidence="6">
    <location>
        <position position="787"/>
    </location>
</feature>
<feature type="glycosylation site" description="O-linked (Gal...) threonine" evidence="6">
    <location>
        <position position="789"/>
    </location>
</feature>
<feature type="glycosylation site" description="O-linked (Gal...) threonine" evidence="6">
    <location>
        <position position="791"/>
    </location>
</feature>
<feature type="glycosylation site" description="O-linked (Gal...) threonine" evidence="6">
    <location>
        <position position="792"/>
    </location>
</feature>
<feature type="glycosylation site" description="O-linked (Gal...) threonine" evidence="6">
    <location>
        <position position="793"/>
    </location>
</feature>
<feature type="glycosylation site" description="O-linked (Gal...) threonine" evidence="6">
    <location>
        <position position="795"/>
    </location>
</feature>
<feature type="glycosylation site" description="O-linked (Gal...) threonine" evidence="6">
    <location>
        <position position="797"/>
    </location>
</feature>
<feature type="glycosylation site" description="O-linked (Gal...) threonine" evidence="6">
    <location>
        <position position="798"/>
    </location>
</feature>
<feature type="glycosylation site" description="O-linked (Gal...) threonine" evidence="6">
    <location>
        <position position="799"/>
    </location>
</feature>
<feature type="glycosylation site" description="O-linked (Gal...) threonine" evidence="6">
    <location>
        <position position="801"/>
    </location>
</feature>
<feature type="glycosylation site" description="O-linked (Gal...) threonine" evidence="6">
    <location>
        <position position="802"/>
    </location>
</feature>
<feature type="glycosylation site" description="O-linked (Gal...) threonine" evidence="6">
    <location>
        <position position="803"/>
    </location>
</feature>
<feature type="glycosylation site" description="O-linked (Gal...) threonine" evidence="6">
    <location>
        <position position="806"/>
    </location>
</feature>
<feature type="glycosylation site" description="O-linked (Gal...) threonine" evidence="6">
    <location>
        <position position="807"/>
    </location>
</feature>
<feature type="glycosylation site" description="O-linked (Gal...) threonine" evidence="6">
    <location>
        <position position="808"/>
    </location>
</feature>
<feature type="glycosylation site" description="N-linked (Glc...) asparagine" evidence="6">
    <location>
        <position position="811"/>
    </location>
</feature>
<feature type="glycosylation site" description="O-linked (Gal...) threonine" evidence="6">
    <location>
        <position position="812"/>
    </location>
</feature>
<feature type="glycosylation site" description="O-linked (Gal...) threonine" evidence="6">
    <location>
        <position position="813"/>
    </location>
</feature>
<feature type="glycosylation site" description="N-linked (Glc...) asparagine" evidence="6">
    <location>
        <position position="815"/>
    </location>
</feature>
<feature type="sequence conflict" description="In Ref. 1; AAA72185." evidence="6" ref="1">
    <original>S</original>
    <variation>F</variation>
    <location>
        <position position="167"/>
    </location>
</feature>
<feature type="sequence conflict" description="In Ref. 1; AAA72185." evidence="6" ref="1">
    <original>S</original>
    <variation>P</variation>
    <location>
        <position position="648"/>
    </location>
</feature>
<feature type="sequence conflict" description="In Ref. 1; AAA72185." evidence="6" ref="1">
    <original>L</original>
    <variation>V</variation>
    <location>
        <position position="698"/>
    </location>
</feature>
<sequence>MTDTTGKLRAVLLTALMVGSVIGAGVAFTGGAAAANASDLNDYQRFNENTNYTYSTASEDGKTEGSVASGATIFQGEEDVTFRKLDNEKEVSPATLSRTGGSDEGVPLQMPIPEDQSTGSYDSNGPDNDEADFGVTVQSPSVTMLEVRNNADNDVTGGVLNTQQDESSIAVDYNYYAAEDLELTVEDEDGLDVTDEILAADQSGGAYEDGTGNNGPNTLRFDIDPNNVDAGDYTVSVEGVEDLDFGDATESASVTISSSNKASLNLAEDEVVQGANLKYTIENSPEGNYHAVTIDSSDFRDSSSGADAAKVMRSVGDTVDTGLVVDNDSTTEIVDDYENTSISDVDYAYAIVEIDDGNGVGSIETQYLDDSSADIDLYPASDTEDAPDYVNSNEELTNGSALDGVSTDDDTDFDVTQGDITLDNPTGAYVVGSEVDINGTANEGTDDVVLYARDNNDFELVTVDGEKSIEVDSDDTFEEEDITLSDGDKGGDDILGLPGTYRLGIIAKSDAVNSSGGVKDNIDTSDFNQGVSSTSSIRVTDTELTASFETYNGQVADDDNQIDVEGTAPGKDNVAAIIIGSRGKVKFQSISVDSDDTFDEEDIDISELRQGSASAHILSSGRDGKFGEDTANSISDLEDEVGNYTSGSPTGDQIRDRILSNTVDDTASDDLIVTQQFRLVDGLTTIEATEGGEAGGSLTVMGTTNRKADDNTITVELLQGDASIEINSTDEWNSDGQWSVDVPLSNVEPGNYTVEADDGDNTDRQNVEIVEELEEPDQTTVDQPENNQTMTTTMTETTTETTTEMTTTQENTTENGSEGTSDGESGGSIPGFGVGVALVAVLGAALLALRQN</sequence>
<proteinExistence type="evidence at protein level"/>
<keyword id="KW-1003">Cell membrane</keyword>
<keyword id="KW-0134">Cell wall</keyword>
<keyword id="KW-0961">Cell wall biogenesis/degradation</keyword>
<keyword id="KW-0903">Direct protein sequencing</keyword>
<keyword id="KW-0325">Glycoprotein</keyword>
<keyword id="KW-0449">Lipoprotein</keyword>
<keyword id="KW-0472">Membrane</keyword>
<keyword id="KW-0654">Proteoglycan</keyword>
<keyword id="KW-0701">S-layer</keyword>
<keyword id="KW-0964">Secreted</keyword>
<keyword id="KW-0732">Signal</keyword>
<keyword id="KW-0812">Transmembrane</keyword>
<keyword id="KW-1133">Transmembrane helix</keyword>
<evidence type="ECO:0000250" key="1">
    <source>
        <dbReference type="UniProtKB" id="P25062"/>
    </source>
</evidence>
<evidence type="ECO:0000255" key="2"/>
<evidence type="ECO:0000256" key="3">
    <source>
        <dbReference type="SAM" id="MobiDB-lite"/>
    </source>
</evidence>
<evidence type="ECO:0000269" key="4">
    <source>
    </source>
</evidence>
<evidence type="ECO:0000269" key="5">
    <source>
    </source>
</evidence>
<evidence type="ECO:0000305" key="6"/>
<name>CSG_HALS3</name>
<organism>
    <name type="scientific">Halobacterium salinarum (strain ATCC 29341 / DSM 671 / R1)</name>
    <dbReference type="NCBI Taxonomy" id="478009"/>
    <lineage>
        <taxon>Archaea</taxon>
        <taxon>Methanobacteriati</taxon>
        <taxon>Methanobacteriota</taxon>
        <taxon>Stenosarchaea group</taxon>
        <taxon>Halobacteria</taxon>
        <taxon>Halobacteriales</taxon>
        <taxon>Halobacteriaceae</taxon>
        <taxon>Halobacterium</taxon>
        <taxon>Halobacterium salinarum NRC-34001</taxon>
    </lineage>
</organism>